<feature type="chain" id="PRO_0000412763" description="Germacrene A hydroxylase">
    <location>
        <begin position="1"/>
        <end position="488"/>
    </location>
</feature>
<feature type="topological domain" description="Cytoplasmic" evidence="4">
    <location>
        <begin position="1"/>
        <end position="6"/>
    </location>
</feature>
<feature type="transmembrane region" description="Helical; Signal-anchor for type II membrane protein" evidence="4">
    <location>
        <begin position="7"/>
        <end position="23"/>
    </location>
</feature>
<feature type="topological domain" description="Lumenal" evidence="4">
    <location>
        <begin position="24"/>
        <end position="488"/>
    </location>
</feature>
<feature type="binding site" description="axial binding residue" evidence="3">
    <location>
        <position position="432"/>
    </location>
    <ligand>
        <name>heme</name>
        <dbReference type="ChEBI" id="CHEBI:30413"/>
    </ligand>
    <ligandPart>
        <name>Fe</name>
        <dbReference type="ChEBI" id="CHEBI:18248"/>
    </ligandPart>
</feature>
<feature type="glycosylation site" description="N-linked (GlcNAc...) asparagine" evidence="5">
    <location>
        <position position="255"/>
    </location>
</feature>
<feature type="glycosylation site" description="N-linked (GlcNAc...) asparagine" evidence="5">
    <location>
        <position position="260"/>
    </location>
</feature>
<feature type="glycosylation site" description="N-linked (GlcNAc...) asparagine" evidence="5">
    <location>
        <position position="379"/>
    </location>
</feature>
<organism>
    <name type="scientific">Saussurea costus</name>
    <name type="common">Costus</name>
    <name type="synonym">Aucklandia costus</name>
    <dbReference type="NCBI Taxonomy" id="324593"/>
    <lineage>
        <taxon>Eukaryota</taxon>
        <taxon>Viridiplantae</taxon>
        <taxon>Streptophyta</taxon>
        <taxon>Embryophyta</taxon>
        <taxon>Tracheophyta</taxon>
        <taxon>Spermatophyta</taxon>
        <taxon>Magnoliopsida</taxon>
        <taxon>eudicotyledons</taxon>
        <taxon>Gunneridae</taxon>
        <taxon>Pentapetalae</taxon>
        <taxon>asterids</taxon>
        <taxon>campanulids</taxon>
        <taxon>Asterales</taxon>
        <taxon>Asteraceae</taxon>
        <taxon>Carduoideae</taxon>
        <taxon>Cardueae</taxon>
        <taxon>Saussureinae</taxon>
        <taxon>Saussurea</taxon>
    </lineage>
</organism>
<dbReference type="EC" id="1.14.14.95" evidence="6"/>
<dbReference type="EMBL" id="GU256645">
    <property type="protein sequence ID" value="ADF43081.1"/>
    <property type="molecule type" value="mRNA"/>
</dbReference>
<dbReference type="SMR" id="D5JBW9"/>
<dbReference type="GlyCosmos" id="D5JBW9">
    <property type="glycosylation" value="3 sites, No reported glycans"/>
</dbReference>
<dbReference type="BRENDA" id="1.14.14.95">
    <property type="organism ID" value="12602"/>
</dbReference>
<dbReference type="UniPathway" id="UPA00213"/>
<dbReference type="GO" id="GO:0005789">
    <property type="term" value="C:endoplasmic reticulum membrane"/>
    <property type="evidence" value="ECO:0007669"/>
    <property type="project" value="UniProtKB-SubCell"/>
</dbReference>
<dbReference type="GO" id="GO:0106223">
    <property type="term" value="F:germacrene A hydroxylase activity"/>
    <property type="evidence" value="ECO:0000314"/>
    <property type="project" value="UniProtKB"/>
</dbReference>
<dbReference type="GO" id="GO:0020037">
    <property type="term" value="F:heme binding"/>
    <property type="evidence" value="ECO:0007669"/>
    <property type="project" value="InterPro"/>
</dbReference>
<dbReference type="GO" id="GO:0005506">
    <property type="term" value="F:iron ion binding"/>
    <property type="evidence" value="ECO:0007669"/>
    <property type="project" value="InterPro"/>
</dbReference>
<dbReference type="GO" id="GO:0051762">
    <property type="term" value="P:sesquiterpene biosynthetic process"/>
    <property type="evidence" value="ECO:0000314"/>
    <property type="project" value="UniProtKB"/>
</dbReference>
<dbReference type="GO" id="GO:0016114">
    <property type="term" value="P:terpenoid biosynthetic process"/>
    <property type="evidence" value="ECO:0007669"/>
    <property type="project" value="UniProtKB-UniPathway"/>
</dbReference>
<dbReference type="CDD" id="cd11072">
    <property type="entry name" value="CYP71-like"/>
    <property type="match status" value="1"/>
</dbReference>
<dbReference type="FunFam" id="1.10.630.10:FF:000043">
    <property type="entry name" value="Cytochrome P450 99A2"/>
    <property type="match status" value="1"/>
</dbReference>
<dbReference type="Gene3D" id="1.10.630.10">
    <property type="entry name" value="Cytochrome P450"/>
    <property type="match status" value="1"/>
</dbReference>
<dbReference type="InterPro" id="IPR001128">
    <property type="entry name" value="Cyt_P450"/>
</dbReference>
<dbReference type="InterPro" id="IPR017972">
    <property type="entry name" value="Cyt_P450_CS"/>
</dbReference>
<dbReference type="InterPro" id="IPR002401">
    <property type="entry name" value="Cyt_P450_E_grp-I"/>
</dbReference>
<dbReference type="InterPro" id="IPR036396">
    <property type="entry name" value="Cyt_P450_sf"/>
</dbReference>
<dbReference type="PANTHER" id="PTHR47955">
    <property type="entry name" value="CYTOCHROME P450 FAMILY 71 PROTEIN"/>
    <property type="match status" value="1"/>
</dbReference>
<dbReference type="PANTHER" id="PTHR47955:SF9">
    <property type="entry name" value="PREMNASPIRODIENE OXYGENASE-LIKE"/>
    <property type="match status" value="1"/>
</dbReference>
<dbReference type="Pfam" id="PF00067">
    <property type="entry name" value="p450"/>
    <property type="match status" value="1"/>
</dbReference>
<dbReference type="PRINTS" id="PR00463">
    <property type="entry name" value="EP450I"/>
</dbReference>
<dbReference type="PRINTS" id="PR00385">
    <property type="entry name" value="P450"/>
</dbReference>
<dbReference type="SUPFAM" id="SSF48264">
    <property type="entry name" value="Cytochrome P450"/>
    <property type="match status" value="1"/>
</dbReference>
<dbReference type="PROSITE" id="PS00086">
    <property type="entry name" value="CYTOCHROME_P450"/>
    <property type="match status" value="1"/>
</dbReference>
<name>GAO_SAUCO</name>
<proteinExistence type="evidence at protein level"/>
<keyword id="KW-0256">Endoplasmic reticulum</keyword>
<keyword id="KW-0325">Glycoprotein</keyword>
<keyword id="KW-0349">Heme</keyword>
<keyword id="KW-0408">Iron</keyword>
<keyword id="KW-0472">Membrane</keyword>
<keyword id="KW-0479">Metal-binding</keyword>
<keyword id="KW-0503">Monooxygenase</keyword>
<keyword id="KW-0560">Oxidoreductase</keyword>
<keyword id="KW-0735">Signal-anchor</keyword>
<keyword id="KW-0812">Transmembrane</keyword>
<keyword id="KW-1133">Transmembrane helix</keyword>
<sequence length="488" mass="55032">MELSFTTSIAVATIVFVLFKLATRPKSNKKLLPEPWRLPIIGHMHHLIGTMPHRGVMDLARKYGSLMHLQLGEVSTIVVSSPKWAKEILTTHDITFANRPETLTGEIIAYHNTDIVLAPYGEYWRQLRKLCTLELLSVKKVKSFQSLREEECWNLVQEVKESGSGRPVDLSENIFKMIATILSRAAFGKGIKDQKEFTEIVKEILRQTGGFDVADIFPSKKFLHHLSGKRARLTSIHKKLDNLINNIVAEHPGNNSSKSNETLLDVMLRLKDSVEFPLTADNVKAIILDMFGAGTDTSSATVEWAISELIRCPRAMEKVQAELRQALKGKDKVKEEDIQDLSYLDLVIKETLRLHPPLPLVMPRECRQPVNLAGYDIANKTKLIVNVFAINRDPEYWKDAESFIPERFENSPITVMGAEYEYLPFGAGRRMCPGAALGLANVQLPLANILYHFNWKLPNGASHDQLDMTESFGATVQRKTHLVLVPSF</sequence>
<accession>D5JBW9</accession>
<protein>
    <recommendedName>
        <fullName evidence="7">Germacrene A hydroxylase</fullName>
        <ecNumber evidence="6">1.14.14.95</ecNumber>
    </recommendedName>
    <alternativeName>
        <fullName evidence="7">Germacrene A oxidase</fullName>
        <shortName evidence="7">SlGAO</shortName>
    </alternativeName>
</protein>
<reference key="1">
    <citation type="journal article" date="2010" name="J. Biol. Chem.">
        <title>Biochemical conservation and evolution of germacrene A oxidase in asteraceae.</title>
        <authorList>
            <person name="Nguyen D.T."/>
            <person name="Goepfert J.C."/>
            <person name="Ikezawa N."/>
            <person name="Macnevin G."/>
            <person name="Kathiresan M."/>
            <person name="Conrad J."/>
            <person name="Spring O."/>
            <person name="Ro D.-K."/>
        </authorList>
    </citation>
    <scope>NUCLEOTIDE SEQUENCE [MRNA]</scope>
    <scope>FUNCTION</scope>
    <scope>CATALYTIC ACTIVITY</scope>
</reference>
<reference key="2">
    <citation type="journal article" date="2019" name="Nat. Prod. Rep.">
        <title>Non-volatile natural products in plant glandular trichomes: chemistry, biological activities and biosynthesis.</title>
        <authorList>
            <person name="Liu Y."/>
            <person name="Jing S.-X."/>
            <person name="Luo S.-H."/>
            <person name="Li S.-H."/>
        </authorList>
    </citation>
    <scope>PATHWAY</scope>
    <scope>REVIEW</scope>
</reference>
<gene>
    <name evidence="7" type="primary">GAO</name>
</gene>
<evidence type="ECO:0000250" key="1"/>
<evidence type="ECO:0000250" key="2">
    <source>
        <dbReference type="UniProtKB" id="D5JBW8"/>
    </source>
</evidence>
<evidence type="ECO:0000250" key="3">
    <source>
        <dbReference type="UniProtKB" id="P04798"/>
    </source>
</evidence>
<evidence type="ECO:0000255" key="4"/>
<evidence type="ECO:0000255" key="5">
    <source>
        <dbReference type="PROSITE-ProRule" id="PRU00498"/>
    </source>
</evidence>
<evidence type="ECO:0000269" key="6">
    <source>
    </source>
</evidence>
<evidence type="ECO:0000303" key="7">
    <source>
    </source>
</evidence>
<evidence type="ECO:0000303" key="8">
    <source>
    </source>
</evidence>
<evidence type="ECO:0000305" key="9"/>
<comment type="function">
    <text evidence="6">Involved in the biosynthesis of germacrene-derived sesquiterpene lactones (PubMed:20351109). Catalyzes three consecutive oxidations of germacrene A to produce germacrene A acid (PubMed:20351109). Could also catalyze the three-step oxidation of non-natural substrate amorphadiene to artemisinic acid (PubMed:20351109).</text>
</comment>
<comment type="catalytic activity">
    <reaction evidence="6">
        <text>(+)-(R)-germacrene A + 3 reduced [NADPH--hemoprotein reductase] + 3 O2 = germacra-1(10),4,11(13)-trien-12-oate + 3 oxidized [NADPH--hemoprotein reductase] + 4 H2O + 4 H(+)</text>
        <dbReference type="Rhea" id="RHEA:30303"/>
        <dbReference type="Rhea" id="RHEA-COMP:11964"/>
        <dbReference type="Rhea" id="RHEA-COMP:11965"/>
        <dbReference type="ChEBI" id="CHEBI:15377"/>
        <dbReference type="ChEBI" id="CHEBI:15378"/>
        <dbReference type="ChEBI" id="CHEBI:15379"/>
        <dbReference type="ChEBI" id="CHEBI:41595"/>
        <dbReference type="ChEBI" id="CHEBI:57618"/>
        <dbReference type="ChEBI" id="CHEBI:58210"/>
        <dbReference type="ChEBI" id="CHEBI:61301"/>
        <dbReference type="EC" id="1.14.14.95"/>
    </reaction>
    <physiologicalReaction direction="left-to-right" evidence="6">
        <dbReference type="Rhea" id="RHEA:30304"/>
    </physiologicalReaction>
</comment>
<comment type="cofactor">
    <cofactor evidence="1">
        <name>heme</name>
        <dbReference type="ChEBI" id="CHEBI:30413"/>
    </cofactor>
</comment>
<comment type="pathway">
    <text evidence="8">Secondary metabolite biosynthesis; terpenoid biosynthesis.</text>
</comment>
<comment type="subcellular location">
    <subcellularLocation>
        <location evidence="2">Endoplasmic reticulum membrane</location>
        <topology evidence="2">Single-pass type II membrane protein</topology>
    </subcellularLocation>
</comment>
<comment type="similarity">
    <text evidence="9">Belongs to the cytochrome P450 family.</text>
</comment>